<sequence length="340" mass="37152">MKKQKIAVLGPGSWGTALAQVLNDNGHEVRIWGNIPEQIDEINEKHTNTRYFKDVILDENIKAYKELSEALDSVNAILFVVPTKVTRLVAKQVAELLDHKVVVMHASKGLEPGTHERLSTILEEEIPSEMRSEIVVVSGPSHAEETIVRDITLITAASKDLETARYVQGIFSNSYFRLYTNSDVIGVETAGALKNIIAVGAGALHGMGYGDNAKAAVITRGLAEITRLGVKLGADPLTYSGLSGVGDLIVTGTSIHSRNWRAGDALGRGEKLEDIERNMGMVIEGISTTKVAYEIAQELGVYMPITTAIYKSIYEGADIKESILNMMSNELRSENEWDKK</sequence>
<reference key="1">
    <citation type="journal article" date="2004" name="Nat. Biotechnol.">
        <title>Complete sequence and comparative genome analysis of the dairy bacterium Streptococcus thermophilus.</title>
        <authorList>
            <person name="Bolotin A."/>
            <person name="Quinquis B."/>
            <person name="Renault P."/>
            <person name="Sorokin A."/>
            <person name="Ehrlich S.D."/>
            <person name="Kulakauskas S."/>
            <person name="Lapidus A."/>
            <person name="Goltsman E."/>
            <person name="Mazur M."/>
            <person name="Pusch G.D."/>
            <person name="Fonstein M."/>
            <person name="Overbeek R."/>
            <person name="Kyprides N."/>
            <person name="Purnelle B."/>
            <person name="Prozzi D."/>
            <person name="Ngui K."/>
            <person name="Masuy D."/>
            <person name="Hancy F."/>
            <person name="Burteau S."/>
            <person name="Boutry M."/>
            <person name="Delcour J."/>
            <person name="Goffeau A."/>
            <person name="Hols P."/>
        </authorList>
    </citation>
    <scope>NUCLEOTIDE SEQUENCE [LARGE SCALE GENOMIC DNA]</scope>
    <source>
        <strain>CNRZ 1066</strain>
    </source>
</reference>
<name>GPDA_STRT1</name>
<comment type="function">
    <text evidence="1">Catalyzes the reduction of the glycolytic intermediate dihydroxyacetone phosphate (DHAP) to sn-glycerol 3-phosphate (G3P), the key precursor for phospholipid synthesis.</text>
</comment>
<comment type="catalytic activity">
    <reaction evidence="1">
        <text>sn-glycerol 3-phosphate + NAD(+) = dihydroxyacetone phosphate + NADH + H(+)</text>
        <dbReference type="Rhea" id="RHEA:11092"/>
        <dbReference type="ChEBI" id="CHEBI:15378"/>
        <dbReference type="ChEBI" id="CHEBI:57540"/>
        <dbReference type="ChEBI" id="CHEBI:57597"/>
        <dbReference type="ChEBI" id="CHEBI:57642"/>
        <dbReference type="ChEBI" id="CHEBI:57945"/>
        <dbReference type="EC" id="1.1.1.94"/>
    </reaction>
    <physiologicalReaction direction="right-to-left" evidence="1">
        <dbReference type="Rhea" id="RHEA:11094"/>
    </physiologicalReaction>
</comment>
<comment type="catalytic activity">
    <reaction evidence="1">
        <text>sn-glycerol 3-phosphate + NADP(+) = dihydroxyacetone phosphate + NADPH + H(+)</text>
        <dbReference type="Rhea" id="RHEA:11096"/>
        <dbReference type="ChEBI" id="CHEBI:15378"/>
        <dbReference type="ChEBI" id="CHEBI:57597"/>
        <dbReference type="ChEBI" id="CHEBI:57642"/>
        <dbReference type="ChEBI" id="CHEBI:57783"/>
        <dbReference type="ChEBI" id="CHEBI:58349"/>
        <dbReference type="EC" id="1.1.1.94"/>
    </reaction>
    <physiologicalReaction direction="right-to-left" evidence="1">
        <dbReference type="Rhea" id="RHEA:11098"/>
    </physiologicalReaction>
</comment>
<comment type="pathway">
    <text evidence="1">Membrane lipid metabolism; glycerophospholipid metabolism.</text>
</comment>
<comment type="subcellular location">
    <subcellularLocation>
        <location evidence="1">Cytoplasm</location>
    </subcellularLocation>
</comment>
<comment type="similarity">
    <text evidence="1">Belongs to the NAD-dependent glycerol-3-phosphate dehydrogenase family.</text>
</comment>
<comment type="sequence caution" evidence="2">
    <conflict type="erroneous initiation">
        <sequence resource="EMBL-CDS" id="AAV63348"/>
    </conflict>
</comment>
<accession>Q5LXY7</accession>
<organism>
    <name type="scientific">Streptococcus thermophilus (strain CNRZ 1066)</name>
    <dbReference type="NCBI Taxonomy" id="299768"/>
    <lineage>
        <taxon>Bacteria</taxon>
        <taxon>Bacillati</taxon>
        <taxon>Bacillota</taxon>
        <taxon>Bacilli</taxon>
        <taxon>Lactobacillales</taxon>
        <taxon>Streptococcaceae</taxon>
        <taxon>Streptococcus</taxon>
    </lineage>
</organism>
<gene>
    <name evidence="1" type="primary">gpsA</name>
    <name type="ordered locus">str1832</name>
</gene>
<feature type="chain" id="PRO_0000255386" description="Glycerol-3-phosphate dehydrogenase [NAD(P)+]">
    <location>
        <begin position="1"/>
        <end position="340"/>
    </location>
</feature>
<feature type="active site" description="Proton acceptor" evidence="1">
    <location>
        <position position="194"/>
    </location>
</feature>
<feature type="binding site" evidence="1">
    <location>
        <position position="13"/>
    </location>
    <ligand>
        <name>NADPH</name>
        <dbReference type="ChEBI" id="CHEBI:57783"/>
    </ligand>
</feature>
<feature type="binding site" evidence="1">
    <location>
        <position position="14"/>
    </location>
    <ligand>
        <name>NADPH</name>
        <dbReference type="ChEBI" id="CHEBI:57783"/>
    </ligand>
</feature>
<feature type="binding site" evidence="1">
    <location>
        <position position="108"/>
    </location>
    <ligand>
        <name>NADPH</name>
        <dbReference type="ChEBI" id="CHEBI:57783"/>
    </ligand>
</feature>
<feature type="binding site" evidence="1">
    <location>
        <position position="108"/>
    </location>
    <ligand>
        <name>sn-glycerol 3-phosphate</name>
        <dbReference type="ChEBI" id="CHEBI:57597"/>
    </ligand>
</feature>
<feature type="binding site" evidence="1">
    <location>
        <position position="139"/>
    </location>
    <ligand>
        <name>sn-glycerol 3-phosphate</name>
        <dbReference type="ChEBI" id="CHEBI:57597"/>
    </ligand>
</feature>
<feature type="binding site" evidence="1">
    <location>
        <position position="141"/>
    </location>
    <ligand>
        <name>sn-glycerol 3-phosphate</name>
        <dbReference type="ChEBI" id="CHEBI:57597"/>
    </ligand>
</feature>
<feature type="binding site" evidence="1">
    <location>
        <position position="143"/>
    </location>
    <ligand>
        <name>NADPH</name>
        <dbReference type="ChEBI" id="CHEBI:57783"/>
    </ligand>
</feature>
<feature type="binding site" evidence="1">
    <location>
        <position position="194"/>
    </location>
    <ligand>
        <name>sn-glycerol 3-phosphate</name>
        <dbReference type="ChEBI" id="CHEBI:57597"/>
    </ligand>
</feature>
<feature type="binding site" evidence="1">
    <location>
        <position position="247"/>
    </location>
    <ligand>
        <name>sn-glycerol 3-phosphate</name>
        <dbReference type="ChEBI" id="CHEBI:57597"/>
    </ligand>
</feature>
<feature type="binding site" evidence="1">
    <location>
        <position position="257"/>
    </location>
    <ligand>
        <name>sn-glycerol 3-phosphate</name>
        <dbReference type="ChEBI" id="CHEBI:57597"/>
    </ligand>
</feature>
<feature type="binding site" evidence="1">
    <location>
        <position position="258"/>
    </location>
    <ligand>
        <name>NADPH</name>
        <dbReference type="ChEBI" id="CHEBI:57783"/>
    </ligand>
</feature>
<feature type="binding site" evidence="1">
    <location>
        <position position="258"/>
    </location>
    <ligand>
        <name>sn-glycerol 3-phosphate</name>
        <dbReference type="ChEBI" id="CHEBI:57597"/>
    </ligand>
</feature>
<feature type="binding site" evidence="1">
    <location>
        <position position="259"/>
    </location>
    <ligand>
        <name>sn-glycerol 3-phosphate</name>
        <dbReference type="ChEBI" id="CHEBI:57597"/>
    </ligand>
</feature>
<feature type="binding site" evidence="1">
    <location>
        <position position="282"/>
    </location>
    <ligand>
        <name>NADPH</name>
        <dbReference type="ChEBI" id="CHEBI:57783"/>
    </ligand>
</feature>
<feature type="binding site" evidence="1">
    <location>
        <position position="284"/>
    </location>
    <ligand>
        <name>NADPH</name>
        <dbReference type="ChEBI" id="CHEBI:57783"/>
    </ligand>
</feature>
<dbReference type="EC" id="1.1.1.94" evidence="1"/>
<dbReference type="EMBL" id="CP000024">
    <property type="protein sequence ID" value="AAV63348.1"/>
    <property type="status" value="ALT_INIT"/>
    <property type="molecule type" value="Genomic_DNA"/>
</dbReference>
<dbReference type="RefSeq" id="WP_011226601.1">
    <property type="nucleotide sequence ID" value="NC_006449.1"/>
</dbReference>
<dbReference type="SMR" id="Q5LXY7"/>
<dbReference type="KEGG" id="stc:str1832"/>
<dbReference type="HOGENOM" id="CLU_033449_0_2_9"/>
<dbReference type="UniPathway" id="UPA00940"/>
<dbReference type="GO" id="GO:0005829">
    <property type="term" value="C:cytosol"/>
    <property type="evidence" value="ECO:0007669"/>
    <property type="project" value="TreeGrafter"/>
</dbReference>
<dbReference type="GO" id="GO:0047952">
    <property type="term" value="F:glycerol-3-phosphate dehydrogenase [NAD(P)+] activity"/>
    <property type="evidence" value="ECO:0007669"/>
    <property type="project" value="UniProtKB-UniRule"/>
</dbReference>
<dbReference type="GO" id="GO:0051287">
    <property type="term" value="F:NAD binding"/>
    <property type="evidence" value="ECO:0007669"/>
    <property type="project" value="InterPro"/>
</dbReference>
<dbReference type="GO" id="GO:0005975">
    <property type="term" value="P:carbohydrate metabolic process"/>
    <property type="evidence" value="ECO:0007669"/>
    <property type="project" value="InterPro"/>
</dbReference>
<dbReference type="GO" id="GO:0046167">
    <property type="term" value="P:glycerol-3-phosphate biosynthetic process"/>
    <property type="evidence" value="ECO:0007669"/>
    <property type="project" value="UniProtKB-UniRule"/>
</dbReference>
<dbReference type="GO" id="GO:0046168">
    <property type="term" value="P:glycerol-3-phosphate catabolic process"/>
    <property type="evidence" value="ECO:0007669"/>
    <property type="project" value="InterPro"/>
</dbReference>
<dbReference type="GO" id="GO:0006650">
    <property type="term" value="P:glycerophospholipid metabolic process"/>
    <property type="evidence" value="ECO:0007669"/>
    <property type="project" value="UniProtKB-UniRule"/>
</dbReference>
<dbReference type="GO" id="GO:0008654">
    <property type="term" value="P:phospholipid biosynthetic process"/>
    <property type="evidence" value="ECO:0007669"/>
    <property type="project" value="UniProtKB-KW"/>
</dbReference>
<dbReference type="FunFam" id="1.10.1040.10:FF:000001">
    <property type="entry name" value="Glycerol-3-phosphate dehydrogenase [NAD(P)+]"/>
    <property type="match status" value="1"/>
</dbReference>
<dbReference type="FunFam" id="3.40.50.720:FF:000019">
    <property type="entry name" value="Glycerol-3-phosphate dehydrogenase [NAD(P)+]"/>
    <property type="match status" value="1"/>
</dbReference>
<dbReference type="Gene3D" id="1.10.1040.10">
    <property type="entry name" value="N-(1-d-carboxylethyl)-l-norvaline Dehydrogenase, domain 2"/>
    <property type="match status" value="1"/>
</dbReference>
<dbReference type="Gene3D" id="3.40.50.720">
    <property type="entry name" value="NAD(P)-binding Rossmann-like Domain"/>
    <property type="match status" value="1"/>
</dbReference>
<dbReference type="HAMAP" id="MF_00394">
    <property type="entry name" value="NAD_Glyc3P_dehydrog"/>
    <property type="match status" value="1"/>
</dbReference>
<dbReference type="InterPro" id="IPR008927">
    <property type="entry name" value="6-PGluconate_DH-like_C_sf"/>
</dbReference>
<dbReference type="InterPro" id="IPR013328">
    <property type="entry name" value="6PGD_dom2"/>
</dbReference>
<dbReference type="InterPro" id="IPR006168">
    <property type="entry name" value="G3P_DH_NAD-dep"/>
</dbReference>
<dbReference type="InterPro" id="IPR006109">
    <property type="entry name" value="G3P_DH_NAD-dep_C"/>
</dbReference>
<dbReference type="InterPro" id="IPR011128">
    <property type="entry name" value="G3P_DH_NAD-dep_N"/>
</dbReference>
<dbReference type="InterPro" id="IPR036291">
    <property type="entry name" value="NAD(P)-bd_dom_sf"/>
</dbReference>
<dbReference type="NCBIfam" id="NF000940">
    <property type="entry name" value="PRK00094.1-2"/>
    <property type="match status" value="1"/>
</dbReference>
<dbReference type="NCBIfam" id="NF000941">
    <property type="entry name" value="PRK00094.1-3"/>
    <property type="match status" value="1"/>
</dbReference>
<dbReference type="NCBIfam" id="NF000942">
    <property type="entry name" value="PRK00094.1-4"/>
    <property type="match status" value="1"/>
</dbReference>
<dbReference type="PANTHER" id="PTHR11728">
    <property type="entry name" value="GLYCEROL-3-PHOSPHATE DEHYDROGENASE"/>
    <property type="match status" value="1"/>
</dbReference>
<dbReference type="PANTHER" id="PTHR11728:SF1">
    <property type="entry name" value="GLYCEROL-3-PHOSPHATE DEHYDROGENASE [NAD(+)] 2, CHLOROPLASTIC"/>
    <property type="match status" value="1"/>
</dbReference>
<dbReference type="Pfam" id="PF07479">
    <property type="entry name" value="NAD_Gly3P_dh_C"/>
    <property type="match status" value="1"/>
</dbReference>
<dbReference type="Pfam" id="PF01210">
    <property type="entry name" value="NAD_Gly3P_dh_N"/>
    <property type="match status" value="1"/>
</dbReference>
<dbReference type="PIRSF" id="PIRSF000114">
    <property type="entry name" value="Glycerol-3-P_dh"/>
    <property type="match status" value="1"/>
</dbReference>
<dbReference type="PRINTS" id="PR00077">
    <property type="entry name" value="GPDHDRGNASE"/>
</dbReference>
<dbReference type="SUPFAM" id="SSF48179">
    <property type="entry name" value="6-phosphogluconate dehydrogenase C-terminal domain-like"/>
    <property type="match status" value="1"/>
</dbReference>
<dbReference type="SUPFAM" id="SSF51735">
    <property type="entry name" value="NAD(P)-binding Rossmann-fold domains"/>
    <property type="match status" value="1"/>
</dbReference>
<dbReference type="PROSITE" id="PS00957">
    <property type="entry name" value="NAD_G3PDH"/>
    <property type="match status" value="1"/>
</dbReference>
<proteinExistence type="inferred from homology"/>
<keyword id="KW-0963">Cytoplasm</keyword>
<keyword id="KW-0444">Lipid biosynthesis</keyword>
<keyword id="KW-0443">Lipid metabolism</keyword>
<keyword id="KW-0520">NAD</keyword>
<keyword id="KW-0521">NADP</keyword>
<keyword id="KW-0547">Nucleotide-binding</keyword>
<keyword id="KW-0560">Oxidoreductase</keyword>
<keyword id="KW-0594">Phospholipid biosynthesis</keyword>
<keyword id="KW-1208">Phospholipid metabolism</keyword>
<evidence type="ECO:0000255" key="1">
    <source>
        <dbReference type="HAMAP-Rule" id="MF_00394"/>
    </source>
</evidence>
<evidence type="ECO:0000305" key="2"/>
<protein>
    <recommendedName>
        <fullName evidence="1">Glycerol-3-phosphate dehydrogenase [NAD(P)+]</fullName>
        <ecNumber evidence="1">1.1.1.94</ecNumber>
    </recommendedName>
    <alternativeName>
        <fullName evidence="1">NAD(P)(+)-dependent glycerol-3-phosphate dehydrogenase</fullName>
    </alternativeName>
    <alternativeName>
        <fullName evidence="1">NAD(P)H-dependent dihydroxyacetone-phosphate reductase</fullName>
    </alternativeName>
</protein>